<protein>
    <recommendedName>
        <fullName>Alpha-defensin 6/12</fullName>
    </recommendedName>
    <alternativeName>
        <fullName>Defensin-related cryptdin-6/12</fullName>
        <shortName>Cryptdin-2</shortName>
    </alternativeName>
</protein>
<feature type="signal peptide" evidence="2">
    <location>
        <begin position="1"/>
        <end position="19"/>
    </location>
</feature>
<feature type="propeptide" id="PRO_0000006827" evidence="1">
    <location>
        <begin position="20"/>
        <end position="60"/>
    </location>
</feature>
<feature type="peptide" id="PRO_0000006828" description="Alpha-defensin 6/12">
    <location>
        <begin position="61"/>
        <end position="93"/>
    </location>
</feature>
<feature type="region of interest" description="Disordered" evidence="3">
    <location>
        <begin position="23"/>
        <end position="54"/>
    </location>
</feature>
<feature type="disulfide bond" evidence="1">
    <location>
        <begin position="64"/>
        <end position="92"/>
    </location>
</feature>
<feature type="disulfide bond" evidence="1">
    <location>
        <begin position="66"/>
        <end position="81"/>
    </location>
</feature>
<feature type="disulfide bond" evidence="1">
    <location>
        <begin position="71"/>
        <end position="91"/>
    </location>
</feature>
<feature type="sequence variant" description="In strain: C3H/HeJ.">
    <original>D</original>
    <variation>Y</variation>
    <location>
        <position position="61"/>
    </location>
</feature>
<feature type="sequence variant" description="In strain: C3H/HeJ.">
    <original>L</original>
    <variation>M</variation>
    <location>
        <position position="87"/>
    </location>
</feature>
<feature type="sequence variant" description="In strain: C3H/HeJ.">
    <original>M</original>
    <variation>T</variation>
    <location>
        <position position="89"/>
    </location>
</feature>
<dbReference type="EMBL" id="U03003">
    <property type="protein sequence ID" value="AAB60679.1"/>
    <property type="molecule type" value="Genomic_DNA"/>
</dbReference>
<dbReference type="EMBL" id="U03002">
    <property type="protein sequence ID" value="AAB60679.1"/>
    <property type="status" value="JOINED"/>
    <property type="molecule type" value="Genomic_DNA"/>
</dbReference>
<dbReference type="EMBL" id="U03034">
    <property type="protein sequence ID" value="AAA57174.1"/>
    <property type="molecule type" value="mRNA"/>
</dbReference>
<dbReference type="EMBL" id="U03063">
    <property type="protein sequence ID" value="AAA57180.1"/>
    <property type="molecule type" value="mRNA"/>
</dbReference>
<dbReference type="EMBL" id="U12561">
    <property type="protein sequence ID" value="AAA20974.1"/>
    <property type="molecule type" value="Genomic_DNA"/>
</dbReference>
<dbReference type="PIR" id="I49104">
    <property type="entry name" value="I49104"/>
</dbReference>
<dbReference type="RefSeq" id="NP_031878.1">
    <property type="nucleotide sequence ID" value="NM_007852.1"/>
</dbReference>
<dbReference type="SMR" id="P50704"/>
<dbReference type="FunCoup" id="P50704">
    <property type="interactions" value="42"/>
</dbReference>
<dbReference type="PhosphoSitePlus" id="P50704"/>
<dbReference type="PeptideAtlas" id="P50704"/>
<dbReference type="DNASU" id="13240"/>
<dbReference type="GeneID" id="13240"/>
<dbReference type="KEGG" id="mmu:13240"/>
<dbReference type="UCSC" id="uc009lbx.2">
    <property type="organism name" value="mouse"/>
</dbReference>
<dbReference type="AGR" id="MGI:99582"/>
<dbReference type="AGR" id="MGI:99589"/>
<dbReference type="CTD" id="1671"/>
<dbReference type="MGI" id="MGI:99589">
    <property type="gene designation" value="Defa12"/>
</dbReference>
<dbReference type="MGI" id="MGI:99582">
    <property type="gene designation" value="Defa6"/>
</dbReference>
<dbReference type="InParanoid" id="P50704"/>
<dbReference type="BioGRID-ORCS" id="13240">
    <property type="hits" value="3 hits in 15 CRISPR screens"/>
</dbReference>
<dbReference type="PRO" id="PR:P50704"/>
<dbReference type="Proteomes" id="UP000000589">
    <property type="component" value="Unplaced"/>
</dbReference>
<dbReference type="RNAct" id="P50704">
    <property type="molecule type" value="protein"/>
</dbReference>
<dbReference type="GO" id="GO:0005615">
    <property type="term" value="C:extracellular space"/>
    <property type="evidence" value="ECO:0000314"/>
    <property type="project" value="MGI"/>
</dbReference>
<dbReference type="GO" id="GO:0071222">
    <property type="term" value="P:cellular response to lipopolysaccharide"/>
    <property type="evidence" value="ECO:0000316"/>
    <property type="project" value="MGI"/>
</dbReference>
<dbReference type="GO" id="GO:0042742">
    <property type="term" value="P:defense response to bacterium"/>
    <property type="evidence" value="ECO:0000314"/>
    <property type="project" value="MGI"/>
</dbReference>
<dbReference type="GO" id="GO:0050829">
    <property type="term" value="P:defense response to Gram-negative bacterium"/>
    <property type="evidence" value="ECO:0000316"/>
    <property type="project" value="MGI"/>
</dbReference>
<dbReference type="GO" id="GO:0050830">
    <property type="term" value="P:defense response to Gram-positive bacterium"/>
    <property type="evidence" value="ECO:0000316"/>
    <property type="project" value="MGI"/>
</dbReference>
<dbReference type="GO" id="GO:0009410">
    <property type="term" value="P:response to xenobiotic stimulus"/>
    <property type="evidence" value="ECO:0000314"/>
    <property type="project" value="MGI"/>
</dbReference>
<dbReference type="InterPro" id="IPR016327">
    <property type="entry name" value="Alpha-defensin"/>
</dbReference>
<dbReference type="InterPro" id="IPR006081">
    <property type="entry name" value="Alpha-defensin_C"/>
</dbReference>
<dbReference type="InterPro" id="IPR002366">
    <property type="entry name" value="Alpha-defensin_N"/>
</dbReference>
<dbReference type="InterPro" id="IPR006080">
    <property type="entry name" value="Beta/alpha-defensin_C"/>
</dbReference>
<dbReference type="PANTHER" id="PTHR11876">
    <property type="entry name" value="ALPHA-DEFENSIN 1"/>
    <property type="match status" value="1"/>
</dbReference>
<dbReference type="PANTHER" id="PTHR11876:SF2">
    <property type="entry name" value="ALPHA-DEFENSIN 1-RELATED"/>
    <property type="match status" value="1"/>
</dbReference>
<dbReference type="Pfam" id="PF00323">
    <property type="entry name" value="Defensin_1"/>
    <property type="match status" value="1"/>
</dbReference>
<dbReference type="Pfam" id="PF00879">
    <property type="entry name" value="Defensin_propep"/>
    <property type="match status" value="1"/>
</dbReference>
<dbReference type="PIRSF" id="PIRSF001875">
    <property type="entry name" value="Alpha-defensin"/>
    <property type="match status" value="1"/>
</dbReference>
<dbReference type="SMART" id="SM01418">
    <property type="entry name" value="Defensin_propep"/>
    <property type="match status" value="1"/>
</dbReference>
<dbReference type="SMART" id="SM00048">
    <property type="entry name" value="DEFSN"/>
    <property type="match status" value="1"/>
</dbReference>
<dbReference type="SUPFAM" id="SSF57392">
    <property type="entry name" value="Defensin-like"/>
    <property type="match status" value="1"/>
</dbReference>
<dbReference type="PROSITE" id="PS00269">
    <property type="entry name" value="DEFENSIN"/>
    <property type="match status" value="1"/>
</dbReference>
<proteinExistence type="evidence at protein level"/>
<keyword id="KW-0044">Antibiotic</keyword>
<keyword id="KW-0929">Antimicrobial</keyword>
<keyword id="KW-0211">Defensin</keyword>
<keyword id="KW-0903">Direct protein sequencing</keyword>
<keyword id="KW-1015">Disulfide bond</keyword>
<keyword id="KW-1185">Reference proteome</keyword>
<keyword id="KW-0964">Secreted</keyword>
<keyword id="KW-0732">Signal</keyword>
<comment type="function">
    <text evidence="4 5">Has broad-spectrum antimicrobial properties. Has antibacterial activity against the Gram-positive bacterium L.monocytogenes EGD and the Gram-negative bacteria E.coli ML-35p and avirulent S.typhimurium 7953, but not against the mouse-virulent S.typhimurium 14028S. Probably contributes to the antimicrobial barrier function of the small bowel mucosa.</text>
</comment>
<comment type="subcellular location">
    <subcellularLocation>
        <location>Secreted</location>
    </subcellularLocation>
</comment>
<comment type="tissue specificity">
    <text>Paneth cells of the small bowel.</text>
</comment>
<comment type="similarity">
    <text evidence="6">Belongs to the alpha-defensin family.</text>
</comment>
<reference key="1">
    <citation type="journal article" date="1994" name="Genomics">
        <title>Structure and diversity of the murine cryptdin gene family.</title>
        <authorList>
            <person name="Huttner K.M."/>
            <person name="Selsted M.E."/>
            <person name="Ouellette A.J."/>
        </authorList>
    </citation>
    <scope>NUCLEOTIDE SEQUENCE [GENOMIC DNA / MRNA] (DEFA6)</scope>
    <scope>NUCLEOTIDE SEQUENCE [MRNA] OF 59-93 (DEFCR12)</scope>
    <source>
        <strain>129</strain>
        <strain>C3H/HeJ</strain>
        <tissue>Intestinal epithelium</tissue>
    </source>
</reference>
<reference key="2">
    <citation type="journal article" date="1994" name="Infect. Immun.">
        <title>Mouse Paneth cell defensins: primary structures and antibacterial activities of numerous cryptdin isoforms.</title>
        <authorList>
            <person name="Ouellette A.J."/>
            <person name="Hsieh M.M."/>
            <person name="Nosek M.T."/>
            <person name="Cano-Gauci D.F."/>
            <person name="Huttner K.M."/>
            <person name="Buick R.N."/>
            <person name="Selsted M.E."/>
        </authorList>
    </citation>
    <scope>NUCLEOTIDE SEQUENCE [MRNA] (DEFA6 AND DEFA12)</scope>
    <scope>FUNCTION</scope>
    <source>
        <strain>CD-1</strain>
        <tissue>Intestinal crypt</tissue>
    </source>
</reference>
<reference key="3">
    <citation type="journal article" date="1992" name="Infect. Immun.">
        <title>Cryptdins: antimicrobial defensins of the murine small intestine.</title>
        <authorList>
            <person name="Eisenhauer P.B."/>
            <person name="Harwig S.S.S.L."/>
            <person name="Lehrer R.I."/>
        </authorList>
    </citation>
    <scope>PROTEIN SEQUENCE OF 59-93</scope>
    <scope>FUNCTION</scope>
    <source>
        <strain>Swiss Webster</strain>
        <tissue>Small intestine</tissue>
    </source>
</reference>
<sequence length="93" mass="10426">MKTLILLSALVLLAFQVQADPIQNTDEETKTEEQPGEEDQAVSVSFGDPEGTSLQEESLRDLVCYCRARGCKGRERMNGTCRKGHLLYMLCCR</sequence>
<evidence type="ECO:0000250" key="1"/>
<evidence type="ECO:0000255" key="2"/>
<evidence type="ECO:0000256" key="3">
    <source>
        <dbReference type="SAM" id="MobiDB-lite"/>
    </source>
</evidence>
<evidence type="ECO:0000269" key="4">
    <source>
    </source>
</evidence>
<evidence type="ECO:0000269" key="5">
    <source>
    </source>
</evidence>
<evidence type="ECO:0000305" key="6"/>
<name>DEFA6_MOUSE</name>
<accession>P50704</accession>
<accession>P50710</accession>
<accession>P82294</accession>
<organism>
    <name type="scientific">Mus musculus</name>
    <name type="common">Mouse</name>
    <dbReference type="NCBI Taxonomy" id="10090"/>
    <lineage>
        <taxon>Eukaryota</taxon>
        <taxon>Metazoa</taxon>
        <taxon>Chordata</taxon>
        <taxon>Craniata</taxon>
        <taxon>Vertebrata</taxon>
        <taxon>Euteleostomi</taxon>
        <taxon>Mammalia</taxon>
        <taxon>Eutheria</taxon>
        <taxon>Euarchontoglires</taxon>
        <taxon>Glires</taxon>
        <taxon>Rodentia</taxon>
        <taxon>Myomorpha</taxon>
        <taxon>Muroidea</taxon>
        <taxon>Muridae</taxon>
        <taxon>Murinae</taxon>
        <taxon>Mus</taxon>
        <taxon>Mus</taxon>
    </lineage>
</organism>
<gene>
    <name type="primary">Defa6</name>
    <name type="synonym">Defcr6</name>
</gene>
<gene>
    <name type="primary">Defa12</name>
    <name type="synonym">Defcr12</name>
</gene>